<accession>Q5L8K8</accession>
<comment type="function">
    <text evidence="1">GTPase that plays an essential role in the late steps of ribosome biogenesis.</text>
</comment>
<comment type="subunit">
    <text evidence="1">Associates with the 50S ribosomal subunit.</text>
</comment>
<comment type="similarity">
    <text evidence="1">Belongs to the TRAFAC class TrmE-Era-EngA-EngB-Septin-like GTPase superfamily. EngA (Der) GTPase family.</text>
</comment>
<reference key="1">
    <citation type="journal article" date="2005" name="Science">
        <title>Extensive DNA inversions in the B. fragilis genome control variable gene expression.</title>
        <authorList>
            <person name="Cerdeno-Tarraga A.-M."/>
            <person name="Patrick S."/>
            <person name="Crossman L.C."/>
            <person name="Blakely G."/>
            <person name="Abratt V."/>
            <person name="Lennard N."/>
            <person name="Poxton I."/>
            <person name="Duerden B."/>
            <person name="Harris B."/>
            <person name="Quail M.A."/>
            <person name="Barron A."/>
            <person name="Clark L."/>
            <person name="Corton C."/>
            <person name="Doggett J."/>
            <person name="Holden M.T.G."/>
            <person name="Larke N."/>
            <person name="Line A."/>
            <person name="Lord A."/>
            <person name="Norbertczak H."/>
            <person name="Ormond D."/>
            <person name="Price C."/>
            <person name="Rabbinowitsch E."/>
            <person name="Woodward J."/>
            <person name="Barrell B.G."/>
            <person name="Parkhill J."/>
        </authorList>
    </citation>
    <scope>NUCLEOTIDE SEQUENCE [LARGE SCALE GENOMIC DNA]</scope>
    <source>
        <strain>ATCC 25285 / DSM 2151 / CCUG 4856 / JCM 11019 / LMG 10263 / NCTC 9343 / Onslow / VPI 2553 / EN-2</strain>
    </source>
</reference>
<name>DER_BACFN</name>
<gene>
    <name evidence="1" type="primary">der</name>
    <name type="synonym">engA</name>
    <name type="ordered locus">BF3902</name>
</gene>
<proteinExistence type="inferred from homology"/>
<feature type="chain" id="PRO_1000011562" description="GTPase Der">
    <location>
        <begin position="1"/>
        <end position="437"/>
    </location>
</feature>
<feature type="domain" description="EngA-type G 1">
    <location>
        <begin position="3"/>
        <end position="167"/>
    </location>
</feature>
<feature type="domain" description="EngA-type G 2">
    <location>
        <begin position="176"/>
        <end position="352"/>
    </location>
</feature>
<feature type="domain" description="KH-like" evidence="1">
    <location>
        <begin position="353"/>
        <end position="437"/>
    </location>
</feature>
<feature type="binding site" evidence="1">
    <location>
        <begin position="9"/>
        <end position="16"/>
    </location>
    <ligand>
        <name>GTP</name>
        <dbReference type="ChEBI" id="CHEBI:37565"/>
        <label>1</label>
    </ligand>
</feature>
<feature type="binding site" evidence="1">
    <location>
        <begin position="56"/>
        <end position="60"/>
    </location>
    <ligand>
        <name>GTP</name>
        <dbReference type="ChEBI" id="CHEBI:37565"/>
        <label>1</label>
    </ligand>
</feature>
<feature type="binding site" evidence="1">
    <location>
        <begin position="119"/>
        <end position="122"/>
    </location>
    <ligand>
        <name>GTP</name>
        <dbReference type="ChEBI" id="CHEBI:37565"/>
        <label>1</label>
    </ligand>
</feature>
<feature type="binding site" evidence="1">
    <location>
        <begin position="182"/>
        <end position="189"/>
    </location>
    <ligand>
        <name>GTP</name>
        <dbReference type="ChEBI" id="CHEBI:37565"/>
        <label>2</label>
    </ligand>
</feature>
<feature type="binding site" evidence="1">
    <location>
        <begin position="229"/>
        <end position="233"/>
    </location>
    <ligand>
        <name>GTP</name>
        <dbReference type="ChEBI" id="CHEBI:37565"/>
        <label>2</label>
    </ligand>
</feature>
<feature type="binding site" evidence="1">
    <location>
        <begin position="294"/>
        <end position="297"/>
    </location>
    <ligand>
        <name>GTP</name>
        <dbReference type="ChEBI" id="CHEBI:37565"/>
        <label>2</label>
    </ligand>
</feature>
<organism>
    <name type="scientific">Bacteroides fragilis (strain ATCC 25285 / DSM 2151 / CCUG 4856 / JCM 11019 / LMG 10263 / NCTC 9343 / Onslow / VPI 2553 / EN-2)</name>
    <dbReference type="NCBI Taxonomy" id="272559"/>
    <lineage>
        <taxon>Bacteria</taxon>
        <taxon>Pseudomonadati</taxon>
        <taxon>Bacteroidota</taxon>
        <taxon>Bacteroidia</taxon>
        <taxon>Bacteroidales</taxon>
        <taxon>Bacteroidaceae</taxon>
        <taxon>Bacteroides</taxon>
    </lineage>
</organism>
<protein>
    <recommendedName>
        <fullName evidence="1">GTPase Der</fullName>
    </recommendedName>
    <alternativeName>
        <fullName evidence="1">GTP-binding protein EngA</fullName>
    </alternativeName>
</protein>
<dbReference type="EMBL" id="CR626927">
    <property type="protein sequence ID" value="CAH09579.1"/>
    <property type="molecule type" value="Genomic_DNA"/>
</dbReference>
<dbReference type="RefSeq" id="WP_005782289.1">
    <property type="nucleotide sequence ID" value="NZ_UFTH01000001.1"/>
</dbReference>
<dbReference type="SMR" id="Q5L8K8"/>
<dbReference type="PaxDb" id="272559-BF9343_3798"/>
<dbReference type="GeneID" id="93105220"/>
<dbReference type="KEGG" id="bfs:BF9343_3798"/>
<dbReference type="eggNOG" id="COG1160">
    <property type="taxonomic scope" value="Bacteria"/>
</dbReference>
<dbReference type="HOGENOM" id="CLU_016077_6_2_10"/>
<dbReference type="Proteomes" id="UP000006731">
    <property type="component" value="Chromosome"/>
</dbReference>
<dbReference type="GO" id="GO:0005525">
    <property type="term" value="F:GTP binding"/>
    <property type="evidence" value="ECO:0007669"/>
    <property type="project" value="UniProtKB-UniRule"/>
</dbReference>
<dbReference type="GO" id="GO:0043022">
    <property type="term" value="F:ribosome binding"/>
    <property type="evidence" value="ECO:0007669"/>
    <property type="project" value="TreeGrafter"/>
</dbReference>
<dbReference type="GO" id="GO:0042254">
    <property type="term" value="P:ribosome biogenesis"/>
    <property type="evidence" value="ECO:0007669"/>
    <property type="project" value="UniProtKB-KW"/>
</dbReference>
<dbReference type="CDD" id="cd01894">
    <property type="entry name" value="EngA1"/>
    <property type="match status" value="1"/>
</dbReference>
<dbReference type="CDD" id="cd01895">
    <property type="entry name" value="EngA2"/>
    <property type="match status" value="1"/>
</dbReference>
<dbReference type="FunFam" id="3.30.300.20:FF:000004">
    <property type="entry name" value="GTPase Der"/>
    <property type="match status" value="1"/>
</dbReference>
<dbReference type="FunFam" id="3.40.50.300:FF:000040">
    <property type="entry name" value="GTPase Der"/>
    <property type="match status" value="1"/>
</dbReference>
<dbReference type="FunFam" id="3.40.50.300:FF:000953">
    <property type="entry name" value="GTPase Der"/>
    <property type="match status" value="1"/>
</dbReference>
<dbReference type="Gene3D" id="3.30.300.20">
    <property type="match status" value="1"/>
</dbReference>
<dbReference type="Gene3D" id="3.40.50.300">
    <property type="entry name" value="P-loop containing nucleotide triphosphate hydrolases"/>
    <property type="match status" value="2"/>
</dbReference>
<dbReference type="HAMAP" id="MF_00195">
    <property type="entry name" value="GTPase_Der"/>
    <property type="match status" value="1"/>
</dbReference>
<dbReference type="InterPro" id="IPR031166">
    <property type="entry name" value="G_ENGA"/>
</dbReference>
<dbReference type="InterPro" id="IPR006073">
    <property type="entry name" value="GTP-bd"/>
</dbReference>
<dbReference type="InterPro" id="IPR016484">
    <property type="entry name" value="GTPase_Der"/>
</dbReference>
<dbReference type="InterPro" id="IPR032859">
    <property type="entry name" value="KH_dom-like"/>
</dbReference>
<dbReference type="InterPro" id="IPR015946">
    <property type="entry name" value="KH_dom-like_a/b"/>
</dbReference>
<dbReference type="InterPro" id="IPR027417">
    <property type="entry name" value="P-loop_NTPase"/>
</dbReference>
<dbReference type="InterPro" id="IPR005225">
    <property type="entry name" value="Small_GTP-bd"/>
</dbReference>
<dbReference type="NCBIfam" id="TIGR03594">
    <property type="entry name" value="GTPase_EngA"/>
    <property type="match status" value="1"/>
</dbReference>
<dbReference type="NCBIfam" id="TIGR00231">
    <property type="entry name" value="small_GTP"/>
    <property type="match status" value="2"/>
</dbReference>
<dbReference type="PANTHER" id="PTHR43834">
    <property type="entry name" value="GTPASE DER"/>
    <property type="match status" value="1"/>
</dbReference>
<dbReference type="PANTHER" id="PTHR43834:SF6">
    <property type="entry name" value="GTPASE DER"/>
    <property type="match status" value="1"/>
</dbReference>
<dbReference type="Pfam" id="PF14714">
    <property type="entry name" value="KH_dom-like"/>
    <property type="match status" value="1"/>
</dbReference>
<dbReference type="Pfam" id="PF01926">
    <property type="entry name" value="MMR_HSR1"/>
    <property type="match status" value="2"/>
</dbReference>
<dbReference type="PIRSF" id="PIRSF006485">
    <property type="entry name" value="GTP-binding_EngA"/>
    <property type="match status" value="1"/>
</dbReference>
<dbReference type="PRINTS" id="PR00326">
    <property type="entry name" value="GTP1OBG"/>
</dbReference>
<dbReference type="SUPFAM" id="SSF52540">
    <property type="entry name" value="P-loop containing nucleoside triphosphate hydrolases"/>
    <property type="match status" value="2"/>
</dbReference>
<dbReference type="PROSITE" id="PS51712">
    <property type="entry name" value="G_ENGA"/>
    <property type="match status" value="2"/>
</dbReference>
<evidence type="ECO:0000255" key="1">
    <source>
        <dbReference type="HAMAP-Rule" id="MF_00195"/>
    </source>
</evidence>
<sequence>MGNLVAIVGRPNVGKSTLFNRLTKTRQAIVNDEAGTTRDRQYGKSEWLGREFSVVDTGGWVVNSDDIFEEEIRKQVLMAVDEADVILFVVDVTNGVTDLDMQVAAILRRAKSPVIMVANKTDNHELRYNAPEFYRLGLGDPYCISAISGSGTGDLMDLIVSKFKKESDEILDEDIPRFAVVGRPNAGKSSIVNAFIGEERNIVTEIAGTTRDSIYTRYNKFGFDFYLVDTAGIRKKNKVNEDLEYYSVVRSIRAIEGADVCILMVDATRGIESQDLNIFSLIQKNSKGLVVVVNKWDLVENKTDKVMKTFEEAIRSRFAPFVDFPIVFASALTKQRILKVLEEARKVYENRMIKIPTARLNEEMLPLIEAYPPPATKGKYIKIKYVTQLPNTQVPSFVFFANLPQYVKEPYRRFLENKMREKWDLSGTPINIYIRQK</sequence>
<keyword id="KW-0342">GTP-binding</keyword>
<keyword id="KW-0547">Nucleotide-binding</keyword>
<keyword id="KW-0677">Repeat</keyword>
<keyword id="KW-0690">Ribosome biogenesis</keyword>